<sequence>MSMNRREFLKTTAAAAAASAVGISIPSEAKAAAENTQAGWQWDKAVCRFCGTGCGIMVAVKDDKIVAVKGDPESPVNRGINCIKGYFNAKIMYGADRLTQPLLRMNDKGEFDKNGKFRPVSWKRAFDEMEKQFKKYYNELGPTGVAVFGSGQYTIQEGYAAVKLVKAGWRSNNIDPNARHCMASAVVGFYQTFGIDEPAGCYDDIEITDTVFVWGANMAEMHPILWSRVSDAKLNNPDKYFIVNLSTYRNRCSNLADMEIIFRPNADLAIMNYLGREILKRNAVNWDFVKKHTIFATGHADIGYGMRNPNSPHVTDKERDTVAKQVAKVVTEEEAVALSPIGKWKAGDEMQMTHTAGKKPFWHWQISFDDFKKAVEPYTLDYVAKVAKGDPDESLDSFKRKLQKLADLYCDPNRKALSFWTMGFNQHVRGSWINELVYMVHLLLGKQSQPGSGAFSLTGQPSACGTAREVGTFAHRLPADMLVGNPKHRKITEKMWKIPEGTLNPKVGSHFLKIMRDIEDGKIKWAWVHVNNPWQNTANANHWIKAARTMDNFIVVNEAYPGVSARVADLILPVSMIYEKWGAYGNAERRTQHWRQQVTPPGEAMPDLWTIMEFSKRFKLKEVWKAHPQAKLPSVLDKAQAMGYDPEMTLFDVLFNRPEYRKNFPWPDPIAKNPQTGKLHANTEAGGDGRTIIGADGKEWKGYGFFVHKALWEEYRKFGLGHAHDLADFDTYHKVRGLRWPVVNGKETKWRFNAEYDPYARKYAKPGEKFAFYGPLLKALKRGDLKGPKTKQKYSLKNKAKIFWRPFMVHPEDPKYDTKGYNFWLCTGRVLEHWHSGTMTMRVPELYRAMPEALCYMNPKDAKELGLNRFDLVVVESRRGKVKARVETRGRNKPPRGLVYVPWFDEKVLINKVCLDATCPLSKETDYKKAAVKVYKA</sequence>
<accession>B9L8L4</accession>
<evidence type="ECO:0000255" key="1">
    <source>
        <dbReference type="HAMAP-Rule" id="MF_01630"/>
    </source>
</evidence>
<keyword id="KW-0004">4Fe-4S</keyword>
<keyword id="KW-0249">Electron transport</keyword>
<keyword id="KW-0408">Iron</keyword>
<keyword id="KW-0411">Iron-sulfur</keyword>
<keyword id="KW-0479">Metal-binding</keyword>
<keyword id="KW-0500">Molybdenum</keyword>
<keyword id="KW-0534">Nitrate assimilation</keyword>
<keyword id="KW-0560">Oxidoreductase</keyword>
<keyword id="KW-0574">Periplasm</keyword>
<keyword id="KW-0732">Signal</keyword>
<keyword id="KW-0813">Transport</keyword>
<protein>
    <recommendedName>
        <fullName evidence="1">Periplasmic nitrate reductase</fullName>
        <ecNumber evidence="1">1.9.6.1</ecNumber>
    </recommendedName>
</protein>
<proteinExistence type="inferred from homology"/>
<name>NAPA_NAUPA</name>
<reference key="1">
    <citation type="journal article" date="2009" name="PLoS Genet.">
        <title>Adaptations to submarine hydrothermal environments exemplified by the genome of Nautilia profundicola.</title>
        <authorList>
            <person name="Campbell B.J."/>
            <person name="Smith J.L."/>
            <person name="Hanson T.E."/>
            <person name="Klotz M.G."/>
            <person name="Stein L.Y."/>
            <person name="Lee C.K."/>
            <person name="Wu D."/>
            <person name="Robinson J.M."/>
            <person name="Khouri H.M."/>
            <person name="Eisen J.A."/>
            <person name="Cary S.C."/>
        </authorList>
    </citation>
    <scope>NUCLEOTIDE SEQUENCE [LARGE SCALE GENOMIC DNA]</scope>
    <source>
        <strain>ATCC BAA-1463 / DSM 18972 / AmH</strain>
    </source>
</reference>
<organism>
    <name type="scientific">Nautilia profundicola (strain ATCC BAA-1463 / DSM 18972 / AmH)</name>
    <dbReference type="NCBI Taxonomy" id="598659"/>
    <lineage>
        <taxon>Bacteria</taxon>
        <taxon>Pseudomonadati</taxon>
        <taxon>Campylobacterota</taxon>
        <taxon>Epsilonproteobacteria</taxon>
        <taxon>Nautiliales</taxon>
        <taxon>Nautiliaceae</taxon>
        <taxon>Nautilia</taxon>
    </lineage>
</organism>
<dbReference type="EC" id="1.9.6.1" evidence="1"/>
<dbReference type="EMBL" id="CP001279">
    <property type="protein sequence ID" value="ACM93598.1"/>
    <property type="molecule type" value="Genomic_DNA"/>
</dbReference>
<dbReference type="SMR" id="B9L8L4"/>
<dbReference type="STRING" id="598659.NAMH_0556"/>
<dbReference type="KEGG" id="nam:NAMH_0556"/>
<dbReference type="eggNOG" id="COG0243">
    <property type="taxonomic scope" value="Bacteria"/>
</dbReference>
<dbReference type="HOGENOM" id="CLU_000422_13_4_7"/>
<dbReference type="Proteomes" id="UP000000448">
    <property type="component" value="Chromosome"/>
</dbReference>
<dbReference type="GO" id="GO:0016020">
    <property type="term" value="C:membrane"/>
    <property type="evidence" value="ECO:0007669"/>
    <property type="project" value="TreeGrafter"/>
</dbReference>
<dbReference type="GO" id="GO:0009325">
    <property type="term" value="C:nitrate reductase complex"/>
    <property type="evidence" value="ECO:0007669"/>
    <property type="project" value="TreeGrafter"/>
</dbReference>
<dbReference type="GO" id="GO:0042597">
    <property type="term" value="C:periplasmic space"/>
    <property type="evidence" value="ECO:0007669"/>
    <property type="project" value="UniProtKB-SubCell"/>
</dbReference>
<dbReference type="GO" id="GO:0051539">
    <property type="term" value="F:4 iron, 4 sulfur cluster binding"/>
    <property type="evidence" value="ECO:0007669"/>
    <property type="project" value="UniProtKB-KW"/>
</dbReference>
<dbReference type="GO" id="GO:0009055">
    <property type="term" value="F:electron transfer activity"/>
    <property type="evidence" value="ECO:0007669"/>
    <property type="project" value="UniProtKB-UniRule"/>
</dbReference>
<dbReference type="GO" id="GO:0005506">
    <property type="term" value="F:iron ion binding"/>
    <property type="evidence" value="ECO:0007669"/>
    <property type="project" value="UniProtKB-UniRule"/>
</dbReference>
<dbReference type="GO" id="GO:0030151">
    <property type="term" value="F:molybdenum ion binding"/>
    <property type="evidence" value="ECO:0007669"/>
    <property type="project" value="InterPro"/>
</dbReference>
<dbReference type="GO" id="GO:0043546">
    <property type="term" value="F:molybdopterin cofactor binding"/>
    <property type="evidence" value="ECO:0007669"/>
    <property type="project" value="InterPro"/>
</dbReference>
<dbReference type="GO" id="GO:0050140">
    <property type="term" value="F:nitrate reductase (cytochrome) activity"/>
    <property type="evidence" value="ECO:0007669"/>
    <property type="project" value="UniProtKB-EC"/>
</dbReference>
<dbReference type="GO" id="GO:0006777">
    <property type="term" value="P:Mo-molybdopterin cofactor biosynthetic process"/>
    <property type="evidence" value="ECO:0007669"/>
    <property type="project" value="UniProtKB-UniRule"/>
</dbReference>
<dbReference type="GO" id="GO:0042128">
    <property type="term" value="P:nitrate assimilation"/>
    <property type="evidence" value="ECO:0007669"/>
    <property type="project" value="UniProtKB-UniRule"/>
</dbReference>
<dbReference type="CDD" id="cd02791">
    <property type="entry name" value="MopB_CT_Nitrate-R-NapA-like"/>
    <property type="match status" value="1"/>
</dbReference>
<dbReference type="FunFam" id="2.40.40.20:FF:000005">
    <property type="entry name" value="Periplasmic nitrate reductase"/>
    <property type="match status" value="1"/>
</dbReference>
<dbReference type="Gene3D" id="2.40.40.20">
    <property type="match status" value="1"/>
</dbReference>
<dbReference type="Gene3D" id="3.30.200.210">
    <property type="match status" value="1"/>
</dbReference>
<dbReference type="Gene3D" id="3.40.50.740">
    <property type="match status" value="1"/>
</dbReference>
<dbReference type="Gene3D" id="2.20.25.90">
    <property type="entry name" value="ADC-like domains"/>
    <property type="match status" value="1"/>
</dbReference>
<dbReference type="Gene3D" id="3.40.228.10">
    <property type="entry name" value="Dimethylsulfoxide Reductase, domain 2"/>
    <property type="match status" value="1"/>
</dbReference>
<dbReference type="HAMAP" id="MF_01630">
    <property type="entry name" value="Nitrate_reduct_NapA"/>
    <property type="match status" value="1"/>
</dbReference>
<dbReference type="InterPro" id="IPR009010">
    <property type="entry name" value="Asp_de-COase-like_dom_sf"/>
</dbReference>
<dbReference type="InterPro" id="IPR041957">
    <property type="entry name" value="CT_Nitrate-R-NapA-like"/>
</dbReference>
<dbReference type="InterPro" id="IPR006657">
    <property type="entry name" value="MoPterin_dinucl-bd_dom"/>
</dbReference>
<dbReference type="InterPro" id="IPR006656">
    <property type="entry name" value="Mopterin_OxRdtase"/>
</dbReference>
<dbReference type="InterPro" id="IPR006963">
    <property type="entry name" value="Mopterin_OxRdtase_4Fe-4S_dom"/>
</dbReference>
<dbReference type="InterPro" id="IPR027467">
    <property type="entry name" value="MopterinOxRdtase_cofactor_BS"/>
</dbReference>
<dbReference type="InterPro" id="IPR010051">
    <property type="entry name" value="Periplasm_NO3_reductase_lsu"/>
</dbReference>
<dbReference type="InterPro" id="IPR050123">
    <property type="entry name" value="Prok_molybdopt-oxidoreductase"/>
</dbReference>
<dbReference type="InterPro" id="IPR006311">
    <property type="entry name" value="TAT_signal"/>
</dbReference>
<dbReference type="InterPro" id="IPR019546">
    <property type="entry name" value="TAT_signal_bac_arc"/>
</dbReference>
<dbReference type="NCBIfam" id="TIGR01706">
    <property type="entry name" value="NAPA"/>
    <property type="match status" value="1"/>
</dbReference>
<dbReference type="NCBIfam" id="NF010055">
    <property type="entry name" value="PRK13532.1"/>
    <property type="match status" value="1"/>
</dbReference>
<dbReference type="NCBIfam" id="TIGR01409">
    <property type="entry name" value="TAT_signal_seq"/>
    <property type="match status" value="1"/>
</dbReference>
<dbReference type="PANTHER" id="PTHR43105:SF11">
    <property type="entry name" value="PERIPLASMIC NITRATE REDUCTASE"/>
    <property type="match status" value="1"/>
</dbReference>
<dbReference type="PANTHER" id="PTHR43105">
    <property type="entry name" value="RESPIRATORY NITRATE REDUCTASE"/>
    <property type="match status" value="1"/>
</dbReference>
<dbReference type="Pfam" id="PF04879">
    <property type="entry name" value="Molybdop_Fe4S4"/>
    <property type="match status" value="1"/>
</dbReference>
<dbReference type="Pfam" id="PF00384">
    <property type="entry name" value="Molybdopterin"/>
    <property type="match status" value="1"/>
</dbReference>
<dbReference type="Pfam" id="PF01568">
    <property type="entry name" value="Molydop_binding"/>
    <property type="match status" value="1"/>
</dbReference>
<dbReference type="Pfam" id="PF10518">
    <property type="entry name" value="TAT_signal"/>
    <property type="match status" value="1"/>
</dbReference>
<dbReference type="SMART" id="SM00926">
    <property type="entry name" value="Molybdop_Fe4S4"/>
    <property type="match status" value="1"/>
</dbReference>
<dbReference type="SUPFAM" id="SSF50692">
    <property type="entry name" value="ADC-like"/>
    <property type="match status" value="1"/>
</dbReference>
<dbReference type="SUPFAM" id="SSF53706">
    <property type="entry name" value="Formate dehydrogenase/DMSO reductase, domains 1-3"/>
    <property type="match status" value="1"/>
</dbReference>
<dbReference type="PROSITE" id="PS51669">
    <property type="entry name" value="4FE4S_MOW_BIS_MGD"/>
    <property type="match status" value="1"/>
</dbReference>
<dbReference type="PROSITE" id="PS00551">
    <property type="entry name" value="MOLYBDOPTERIN_PROK_1"/>
    <property type="match status" value="1"/>
</dbReference>
<dbReference type="PROSITE" id="PS51318">
    <property type="entry name" value="TAT"/>
    <property type="match status" value="1"/>
</dbReference>
<comment type="function">
    <text evidence="1">Catalytic subunit of the periplasmic nitrate reductase complex NapAB. Receives electrons from NapB and catalyzes the reduction of nitrate to nitrite.</text>
</comment>
<comment type="catalytic activity">
    <reaction evidence="1">
        <text>2 Fe(II)-[cytochrome] + nitrate + 2 H(+) = 2 Fe(III)-[cytochrome] + nitrite + H2O</text>
        <dbReference type="Rhea" id="RHEA:12909"/>
        <dbReference type="Rhea" id="RHEA-COMP:11777"/>
        <dbReference type="Rhea" id="RHEA-COMP:11778"/>
        <dbReference type="ChEBI" id="CHEBI:15377"/>
        <dbReference type="ChEBI" id="CHEBI:15378"/>
        <dbReference type="ChEBI" id="CHEBI:16301"/>
        <dbReference type="ChEBI" id="CHEBI:17632"/>
        <dbReference type="ChEBI" id="CHEBI:29033"/>
        <dbReference type="ChEBI" id="CHEBI:29034"/>
        <dbReference type="EC" id="1.9.6.1"/>
    </reaction>
</comment>
<comment type="cofactor">
    <cofactor evidence="1">
        <name>[4Fe-4S] cluster</name>
        <dbReference type="ChEBI" id="CHEBI:49883"/>
    </cofactor>
    <text evidence="1">Binds 1 [4Fe-4S] cluster.</text>
</comment>
<comment type="cofactor">
    <cofactor evidence="1">
        <name>Mo-bis(molybdopterin guanine dinucleotide)</name>
        <dbReference type="ChEBI" id="CHEBI:60539"/>
    </cofactor>
    <text evidence="1">Binds 1 molybdenum-bis(molybdopterin guanine dinucleotide) (Mo-bis-MGD) cofactor per subunit.</text>
</comment>
<comment type="subunit">
    <text evidence="1">Component of the periplasmic nitrate reductase NapAB complex composed of NapA and NapB.</text>
</comment>
<comment type="subcellular location">
    <subcellularLocation>
        <location evidence="1">Periplasm</location>
    </subcellularLocation>
</comment>
<comment type="PTM">
    <text evidence="1">Predicted to be exported by the Tat system. The position of the signal peptide cleavage has not been experimentally proven.</text>
</comment>
<comment type="similarity">
    <text evidence="1">Belongs to the prokaryotic molybdopterin-containing oxidoreductase family. NasA/NapA/NarB subfamily.</text>
</comment>
<feature type="signal peptide" description="Tat-type signal" evidence="1">
    <location>
        <begin position="1"/>
        <end position="31"/>
    </location>
</feature>
<feature type="chain" id="PRO_1000186367" description="Periplasmic nitrate reductase" evidence="1">
    <location>
        <begin position="32"/>
        <end position="937"/>
    </location>
</feature>
<feature type="domain" description="4Fe-4S Mo/W bis-MGD-type" evidence="1">
    <location>
        <begin position="40"/>
        <end position="96"/>
    </location>
</feature>
<feature type="binding site" evidence="1">
    <location>
        <position position="47"/>
    </location>
    <ligand>
        <name>[4Fe-4S] cluster</name>
        <dbReference type="ChEBI" id="CHEBI:49883"/>
    </ligand>
</feature>
<feature type="binding site" evidence="1">
    <location>
        <position position="50"/>
    </location>
    <ligand>
        <name>[4Fe-4S] cluster</name>
        <dbReference type="ChEBI" id="CHEBI:49883"/>
    </ligand>
</feature>
<feature type="binding site" evidence="1">
    <location>
        <position position="54"/>
    </location>
    <ligand>
        <name>[4Fe-4S] cluster</name>
        <dbReference type="ChEBI" id="CHEBI:49883"/>
    </ligand>
</feature>
<feature type="binding site" evidence="1">
    <location>
        <position position="82"/>
    </location>
    <ligand>
        <name>[4Fe-4S] cluster</name>
        <dbReference type="ChEBI" id="CHEBI:49883"/>
    </ligand>
</feature>
<feature type="binding site" evidence="1">
    <location>
        <position position="84"/>
    </location>
    <ligand>
        <name>Mo-bis(molybdopterin guanine dinucleotide)</name>
        <dbReference type="ChEBI" id="CHEBI:60539"/>
    </ligand>
</feature>
<feature type="binding site" evidence="1">
    <location>
        <position position="152"/>
    </location>
    <ligand>
        <name>Mo-bis(molybdopterin guanine dinucleotide)</name>
        <dbReference type="ChEBI" id="CHEBI:60539"/>
    </ligand>
</feature>
<feature type="binding site" evidence="1">
    <location>
        <position position="177"/>
    </location>
    <ligand>
        <name>Mo-bis(molybdopterin guanine dinucleotide)</name>
        <dbReference type="ChEBI" id="CHEBI:60539"/>
    </ligand>
</feature>
<feature type="binding site" evidence="1">
    <location>
        <position position="181"/>
    </location>
    <ligand>
        <name>Mo-bis(molybdopterin guanine dinucleotide)</name>
        <dbReference type="ChEBI" id="CHEBI:60539"/>
    </ligand>
</feature>
<feature type="binding site" evidence="1">
    <location>
        <begin position="214"/>
        <end position="221"/>
    </location>
    <ligand>
        <name>Mo-bis(molybdopterin guanine dinucleotide)</name>
        <dbReference type="ChEBI" id="CHEBI:60539"/>
    </ligand>
</feature>
<feature type="binding site" evidence="1">
    <location>
        <position position="422"/>
    </location>
    <ligand>
        <name>Mo-bis(molybdopterin guanine dinucleotide)</name>
        <dbReference type="ChEBI" id="CHEBI:60539"/>
    </ligand>
</feature>
<feature type="binding site" evidence="1">
    <location>
        <position position="426"/>
    </location>
    <ligand>
        <name>Mo-bis(molybdopterin guanine dinucleotide)</name>
        <dbReference type="ChEBI" id="CHEBI:60539"/>
    </ligand>
</feature>
<feature type="binding site" evidence="1">
    <location>
        <position position="532"/>
    </location>
    <ligand>
        <name>Mo-bis(molybdopterin guanine dinucleotide)</name>
        <dbReference type="ChEBI" id="CHEBI:60539"/>
    </ligand>
</feature>
<feature type="binding site" evidence="1">
    <location>
        <position position="580"/>
    </location>
    <ligand>
        <name>Mo-bis(molybdopterin guanine dinucleotide)</name>
        <dbReference type="ChEBI" id="CHEBI:60539"/>
    </ligand>
</feature>
<feature type="binding site" evidence="1">
    <location>
        <position position="607"/>
    </location>
    <ligand>
        <name>Mo-bis(molybdopterin guanine dinucleotide)</name>
        <dbReference type="ChEBI" id="CHEBI:60539"/>
    </ligand>
</feature>
<feature type="binding site" evidence="1">
    <location>
        <begin position="827"/>
        <end position="836"/>
    </location>
    <ligand>
        <name>Mo-bis(molybdopterin guanine dinucleotide)</name>
        <dbReference type="ChEBI" id="CHEBI:60539"/>
    </ligand>
</feature>
<feature type="binding site" evidence="1">
    <location>
        <position position="903"/>
    </location>
    <ligand>
        <name>substrate</name>
    </ligand>
</feature>
<feature type="binding site" evidence="1">
    <location>
        <position position="911"/>
    </location>
    <ligand>
        <name>Mo-bis(molybdopterin guanine dinucleotide)</name>
        <dbReference type="ChEBI" id="CHEBI:60539"/>
    </ligand>
</feature>
<feature type="binding site" evidence="1">
    <location>
        <position position="928"/>
    </location>
    <ligand>
        <name>Mo-bis(molybdopterin guanine dinucleotide)</name>
        <dbReference type="ChEBI" id="CHEBI:60539"/>
    </ligand>
</feature>
<gene>
    <name evidence="1" type="primary">napA</name>
    <name type="ordered locus">NAMH_0556</name>
</gene>